<keyword id="KW-0021">Allosteric enzyme</keyword>
<keyword id="KW-1185">Reference proteome</keyword>
<keyword id="KW-0808">Transferase</keyword>
<keyword id="KW-0816">Tricarboxylic acid cycle</keyword>
<sequence length="373" mass="40147">MTVVPENFVPGLDGVVAFTTEIAEPDKDGGALRYRGVDIEDLVSQRVTFGDVWALLVDGNFGSGLPPAEPFPLPIHSGDVRVDVQAGLAMLAPIWGYAPLLDIDDATARQQLARASVMALSYVAQSARGIYQPAVPQRIIDECSTVTARFMTRWQGEPDPRHIEAIDAYWVSAAEHGMNASTFTARVIASTGADVAAALSGAIGAMSGPLHGGAPARVLPMLDEVERAGDARSVVKGILDRGEKLMGFGHRVYRAEDPRARVLRAAAERLGAPRYEVAVAVEQAALSELRERRPDRAIETNVEFWAAVVLDFARVPANMMPAMFTCGRTAGWCAHILEQKRLGKLVRPSAIYVGPGPRSPESVDGWERVLTTA</sequence>
<comment type="catalytic activity">
    <reaction evidence="2">
        <text>oxaloacetate + acetyl-CoA + H2O = citrate + CoA + H(+)</text>
        <dbReference type="Rhea" id="RHEA:16845"/>
        <dbReference type="ChEBI" id="CHEBI:15377"/>
        <dbReference type="ChEBI" id="CHEBI:15378"/>
        <dbReference type="ChEBI" id="CHEBI:16452"/>
        <dbReference type="ChEBI" id="CHEBI:16947"/>
        <dbReference type="ChEBI" id="CHEBI:57287"/>
        <dbReference type="ChEBI" id="CHEBI:57288"/>
        <dbReference type="EC" id="2.3.3.16"/>
    </reaction>
</comment>
<comment type="pathway">
    <text>Carbohydrate metabolism; tricarboxylic acid cycle; isocitrate from oxaloacetate: step 1/2.</text>
</comment>
<comment type="miscellaneous">
    <text evidence="1">Citrate synthase is found in nearly all cells capable of oxidative metabolism.</text>
</comment>
<comment type="similarity">
    <text evidence="3">Belongs to the citrate synthase family.</text>
</comment>
<dbReference type="EC" id="2.3.3.16"/>
<dbReference type="EMBL" id="AE000516">
    <property type="protein sequence ID" value="AAK45158.1"/>
    <property type="molecule type" value="Genomic_DNA"/>
</dbReference>
<dbReference type="PIR" id="F70781">
    <property type="entry name" value="F70781"/>
</dbReference>
<dbReference type="RefSeq" id="WP_003898633.1">
    <property type="nucleotide sequence ID" value="NZ_KK341227.1"/>
</dbReference>
<dbReference type="SMR" id="P9WPD2"/>
<dbReference type="KEGG" id="mtc:MT0912"/>
<dbReference type="PATRIC" id="fig|83331.31.peg.981"/>
<dbReference type="HOGENOM" id="CLU_025068_2_1_11"/>
<dbReference type="UniPathway" id="UPA00223">
    <property type="reaction ID" value="UER00717"/>
</dbReference>
<dbReference type="Proteomes" id="UP000001020">
    <property type="component" value="Chromosome"/>
</dbReference>
<dbReference type="GO" id="GO:0005829">
    <property type="term" value="C:cytosol"/>
    <property type="evidence" value="ECO:0007669"/>
    <property type="project" value="TreeGrafter"/>
</dbReference>
<dbReference type="GO" id="GO:0004108">
    <property type="term" value="F:citrate (Si)-synthase activity"/>
    <property type="evidence" value="ECO:0007669"/>
    <property type="project" value="TreeGrafter"/>
</dbReference>
<dbReference type="GO" id="GO:0005975">
    <property type="term" value="P:carbohydrate metabolic process"/>
    <property type="evidence" value="ECO:0007669"/>
    <property type="project" value="TreeGrafter"/>
</dbReference>
<dbReference type="GO" id="GO:0006099">
    <property type="term" value="P:tricarboxylic acid cycle"/>
    <property type="evidence" value="ECO:0007669"/>
    <property type="project" value="UniProtKB-UniPathway"/>
</dbReference>
<dbReference type="CDD" id="cd06109">
    <property type="entry name" value="BsCS-I_like"/>
    <property type="match status" value="1"/>
</dbReference>
<dbReference type="FunFam" id="1.10.230.10:FF:000006">
    <property type="entry name" value="Citrate synthase 2"/>
    <property type="match status" value="1"/>
</dbReference>
<dbReference type="FunFam" id="1.10.580.10:FF:000007">
    <property type="entry name" value="Citrate synthase 2"/>
    <property type="match status" value="1"/>
</dbReference>
<dbReference type="Gene3D" id="1.10.580.10">
    <property type="entry name" value="Citrate Synthase, domain 1"/>
    <property type="match status" value="2"/>
</dbReference>
<dbReference type="Gene3D" id="1.10.230.10">
    <property type="entry name" value="Cytochrome P450-Terp, domain 2"/>
    <property type="match status" value="1"/>
</dbReference>
<dbReference type="InterPro" id="IPR016142">
    <property type="entry name" value="Citrate_synth-like_lrg_a-sub"/>
</dbReference>
<dbReference type="InterPro" id="IPR016143">
    <property type="entry name" value="Citrate_synth-like_sm_a-sub"/>
</dbReference>
<dbReference type="InterPro" id="IPR002020">
    <property type="entry name" value="Citrate_synthase"/>
</dbReference>
<dbReference type="InterPro" id="IPR019810">
    <property type="entry name" value="Citrate_synthase_AS"/>
</dbReference>
<dbReference type="InterPro" id="IPR036969">
    <property type="entry name" value="Citrate_synthase_sf"/>
</dbReference>
<dbReference type="NCBIfam" id="NF009005">
    <property type="entry name" value="PRK12350.1"/>
    <property type="match status" value="1"/>
</dbReference>
<dbReference type="PANTHER" id="PTHR11739">
    <property type="entry name" value="CITRATE SYNTHASE"/>
    <property type="match status" value="1"/>
</dbReference>
<dbReference type="PANTHER" id="PTHR11739:SF23">
    <property type="entry name" value="CITRATE SYNTHASE 2-RELATED"/>
    <property type="match status" value="1"/>
</dbReference>
<dbReference type="Pfam" id="PF00285">
    <property type="entry name" value="Citrate_synt"/>
    <property type="match status" value="2"/>
</dbReference>
<dbReference type="PRINTS" id="PR00143">
    <property type="entry name" value="CITRTSNTHASE"/>
</dbReference>
<dbReference type="SUPFAM" id="SSF48256">
    <property type="entry name" value="Citrate synthase"/>
    <property type="match status" value="1"/>
</dbReference>
<dbReference type="PROSITE" id="PS00480">
    <property type="entry name" value="CITRATE_SYNTHASE"/>
    <property type="match status" value="1"/>
</dbReference>
<name>CISY2_MYCTO</name>
<organism>
    <name type="scientific">Mycobacterium tuberculosis (strain CDC 1551 / Oshkosh)</name>
    <dbReference type="NCBI Taxonomy" id="83331"/>
    <lineage>
        <taxon>Bacteria</taxon>
        <taxon>Bacillati</taxon>
        <taxon>Actinomycetota</taxon>
        <taxon>Actinomycetes</taxon>
        <taxon>Mycobacteriales</taxon>
        <taxon>Mycobacteriaceae</taxon>
        <taxon>Mycobacterium</taxon>
        <taxon>Mycobacterium tuberculosis complex</taxon>
    </lineage>
</organism>
<accession>P9WPD2</accession>
<accession>L0T808</accession>
<accession>P63777</accession>
<accession>Q10529</accession>
<gene>
    <name type="primary">citA</name>
    <name type="ordered locus">MT0912</name>
</gene>
<reference key="1">
    <citation type="journal article" date="2002" name="J. Bacteriol.">
        <title>Whole-genome comparison of Mycobacterium tuberculosis clinical and laboratory strains.</title>
        <authorList>
            <person name="Fleischmann R.D."/>
            <person name="Alland D."/>
            <person name="Eisen J.A."/>
            <person name="Carpenter L."/>
            <person name="White O."/>
            <person name="Peterson J.D."/>
            <person name="DeBoy R.T."/>
            <person name="Dodson R.J."/>
            <person name="Gwinn M.L."/>
            <person name="Haft D.H."/>
            <person name="Hickey E.K."/>
            <person name="Kolonay J.F."/>
            <person name="Nelson W.C."/>
            <person name="Umayam L.A."/>
            <person name="Ermolaeva M.D."/>
            <person name="Salzberg S.L."/>
            <person name="Delcher A."/>
            <person name="Utterback T.R."/>
            <person name="Weidman J.F."/>
            <person name="Khouri H.M."/>
            <person name="Gill J."/>
            <person name="Mikula A."/>
            <person name="Bishai W."/>
            <person name="Jacobs W.R. Jr."/>
            <person name="Venter J.C."/>
            <person name="Fraser C.M."/>
        </authorList>
    </citation>
    <scope>NUCLEOTIDE SEQUENCE [LARGE SCALE GENOMIC DNA]</scope>
    <source>
        <strain>CDC 1551 / Oshkosh</strain>
    </source>
</reference>
<proteinExistence type="inferred from homology"/>
<feature type="chain" id="PRO_0000426972" description="Putative citrate synthase 2">
    <location>
        <begin position="1"/>
        <end position="373"/>
    </location>
</feature>
<feature type="active site" evidence="2">
    <location>
        <position position="250"/>
    </location>
</feature>
<feature type="active site" evidence="2">
    <location>
        <position position="303"/>
    </location>
</feature>
<evidence type="ECO:0000250" key="1"/>
<evidence type="ECO:0000255" key="2">
    <source>
        <dbReference type="PROSITE-ProRule" id="PRU10117"/>
    </source>
</evidence>
<evidence type="ECO:0000305" key="3"/>
<protein>
    <recommendedName>
        <fullName>Putative citrate synthase 2</fullName>
        <ecNumber>2.3.3.16</ecNumber>
    </recommendedName>
</protein>